<dbReference type="EMBL" id="M33156">
    <property type="protein sequence ID" value="AAA29347.1"/>
    <property type="molecule type" value="Genomic_DNA"/>
</dbReference>
<dbReference type="EMBL" id="M33157">
    <property type="protein sequence ID" value="AAA29348.1"/>
    <property type="molecule type" value="mRNA"/>
</dbReference>
<dbReference type="EMBL" id="EF173376">
    <property type="protein sequence ID" value="ABM68616.1"/>
    <property type="molecule type" value="Genomic_DNA"/>
</dbReference>
<dbReference type="EMBL" id="CH477389">
    <property type="protein sequence ID" value="EAT41994.1"/>
    <property type="molecule type" value="Genomic_DNA"/>
</dbReference>
<dbReference type="EMBL" id="AF027814">
    <property type="protein sequence ID" value="AAD01849.1"/>
    <property type="molecule type" value="mRNA"/>
</dbReference>
<dbReference type="RefSeq" id="XP_001657779.1">
    <molecule id="P18153-1"/>
    <property type="nucleotide sequence ID" value="XM_001657729.1"/>
</dbReference>
<dbReference type="PDB" id="3DXL">
    <property type="method" value="X-ray"/>
    <property type="resolution" value="1.30 A"/>
    <property type="chains" value="A=20-321"/>
</dbReference>
<dbReference type="PDB" id="3DY9">
    <property type="method" value="X-ray"/>
    <property type="resolution" value="1.70 A"/>
    <property type="chains" value="A=20-321"/>
</dbReference>
<dbReference type="PDB" id="3DYE">
    <property type="method" value="X-ray"/>
    <property type="resolution" value="1.75 A"/>
    <property type="chains" value="A=20-321"/>
</dbReference>
<dbReference type="PDB" id="3DZT">
    <property type="method" value="X-ray"/>
    <property type="resolution" value="1.80 A"/>
    <property type="chains" value="A=20-321"/>
</dbReference>
<dbReference type="PDBsum" id="3DXL"/>
<dbReference type="PDBsum" id="3DY9"/>
<dbReference type="PDBsum" id="3DYE"/>
<dbReference type="PDBsum" id="3DZT"/>
<dbReference type="SMR" id="P18153"/>
<dbReference type="STRING" id="7159.P18153"/>
<dbReference type="Allergome" id="3540">
    <property type="allergen name" value="Aed a 2.0101"/>
</dbReference>
<dbReference type="Allergome" id="4">
    <property type="allergen name" value="Aed a 2"/>
</dbReference>
<dbReference type="PaxDb" id="7159-AAEL006424-PA"/>
<dbReference type="EnsemblMetazoa" id="AAEL006424-RA">
    <molecule id="P18153-1"/>
    <property type="protein sequence ID" value="AAEL006424-PA"/>
    <property type="gene ID" value="AAEL006424"/>
</dbReference>
<dbReference type="EnsemblMetazoa" id="AAEL026087-RA">
    <molecule id="P18153-1"/>
    <property type="protein sequence ID" value="AAEL026087-PA"/>
    <property type="gene ID" value="AAEL026087"/>
</dbReference>
<dbReference type="GeneID" id="5567958"/>
<dbReference type="KEGG" id="aag:5567958"/>
<dbReference type="VEuPathDB" id="VectorBase:AAEL006424"/>
<dbReference type="VEuPathDB" id="VectorBase:AAEL026087"/>
<dbReference type="eggNOG" id="ENOG502T82F">
    <property type="taxonomic scope" value="Eukaryota"/>
</dbReference>
<dbReference type="HOGENOM" id="CLU_077766_0_0_1"/>
<dbReference type="InParanoid" id="P18153"/>
<dbReference type="OMA" id="CYAKCVL"/>
<dbReference type="OrthoDB" id="7722701at2759"/>
<dbReference type="PhylomeDB" id="P18153"/>
<dbReference type="EvolutionaryTrace" id="P18153"/>
<dbReference type="Proteomes" id="UP000008820">
    <property type="component" value="Chromosome 2"/>
</dbReference>
<dbReference type="Proteomes" id="UP000008820">
    <property type="component" value="Unassembled WGS sequence"/>
</dbReference>
<dbReference type="Proteomes" id="UP000682892">
    <property type="component" value="Chromosome 2"/>
</dbReference>
<dbReference type="GO" id="GO:0005615">
    <property type="term" value="C:extracellular space"/>
    <property type="evidence" value="ECO:0000314"/>
    <property type="project" value="UniProtKB"/>
</dbReference>
<dbReference type="GO" id="GO:0019863">
    <property type="term" value="F:IgE binding"/>
    <property type="evidence" value="ECO:0000314"/>
    <property type="project" value="UniProtKB"/>
</dbReference>
<dbReference type="GO" id="GO:0005549">
    <property type="term" value="F:odorant binding"/>
    <property type="evidence" value="ECO:0007669"/>
    <property type="project" value="InterPro"/>
</dbReference>
<dbReference type="GO" id="GO:0090729">
    <property type="term" value="F:toxin activity"/>
    <property type="evidence" value="ECO:0007669"/>
    <property type="project" value="UniProtKB-KW"/>
</dbReference>
<dbReference type="GO" id="GO:0050688">
    <property type="term" value="P:regulation of defense response to virus"/>
    <property type="evidence" value="ECO:0007669"/>
    <property type="project" value="UniProtKB-KW"/>
</dbReference>
<dbReference type="GO" id="GO:0007608">
    <property type="term" value="P:sensory perception of smell"/>
    <property type="evidence" value="ECO:0007669"/>
    <property type="project" value="TreeGrafter"/>
</dbReference>
<dbReference type="GO" id="GO:0042311">
    <property type="term" value="P:vasodilation"/>
    <property type="evidence" value="ECO:0007669"/>
    <property type="project" value="UniProtKB-KW"/>
</dbReference>
<dbReference type="CDD" id="cd23992">
    <property type="entry name" value="PBP_GOBP"/>
    <property type="match status" value="1"/>
</dbReference>
<dbReference type="Gene3D" id="1.10.238.20">
    <property type="entry name" value="Pheromone/general odorant binding protein domain"/>
    <property type="match status" value="2"/>
</dbReference>
<dbReference type="InterPro" id="IPR006170">
    <property type="entry name" value="PBP/GOBP"/>
</dbReference>
<dbReference type="InterPro" id="IPR036728">
    <property type="entry name" value="PBP_GOBP_sf"/>
</dbReference>
<dbReference type="PANTHER" id="PTHR11857:SF43">
    <property type="entry name" value="GEO07291P1-RELATED"/>
    <property type="match status" value="1"/>
</dbReference>
<dbReference type="PANTHER" id="PTHR11857">
    <property type="entry name" value="ODORANT BINDING PROTEIN-RELATED"/>
    <property type="match status" value="1"/>
</dbReference>
<dbReference type="Pfam" id="PF01395">
    <property type="entry name" value="PBP_GOBP"/>
    <property type="match status" value="2"/>
</dbReference>
<dbReference type="SMART" id="SM00708">
    <property type="entry name" value="PhBP"/>
    <property type="match status" value="2"/>
</dbReference>
<dbReference type="SUPFAM" id="SSF47565">
    <property type="entry name" value="Insect pheromone/odorant-binding proteins"/>
    <property type="match status" value="2"/>
</dbReference>
<name>D7L1_AEDAE</name>
<comment type="function">
    <text evidence="2 5 8 9 10">Modulates blood feeding of female mosquitoes on vertebrate species by binding and sequestering different mediators involved in the host response, such as biogenic amines and eicosanoids (PubMed:32799410, PubMed:37909749). Binds serotonin, histamine, leukotriene B4, leukotriene C4, leukotriene D4, leukotriene E4, adrenaline and noradrenaline (PubMed:16301315, PubMed:19234127, PubMed:32799410). Does not bind tryptamine and U-46619, a stable analog of thromboxane A2 (PubMed:19234127, PubMed:32799410). Exhibits vasodilating activity (PubMed:32799410). Inhibits agonist-induced platelet aggregation but not blood clotting (PubMed:32799410). Inhibits noradrenaline-induced smooth muscle contraction (PubMed:16301315). Promotes an influx of host neutrophils at the inoculation site (PubMed:38378891).</text>
</comment>
<comment type="function">
    <text evidence="9">(Microbial infection) Probably promotes Plasmodium gallinaceum oocyst development in mosquito midgut.</text>
</comment>
<comment type="function">
    <text evidence="7">(Microbial infection) Exhibits antiviral activity against dengue virus type 2 probably through a direct interaction with dengue virus virions.</text>
</comment>
<comment type="subunit">
    <text evidence="7">(Microbial infection) Interacts with envelope protein of dengue virus type 2.</text>
</comment>
<comment type="subcellular location">
    <subcellularLocation>
        <location evidence="4 6 7">Secreted</location>
    </subcellularLocation>
</comment>
<comment type="alternative products">
    <event type="alternative splicing"/>
    <isoform>
        <id>P18153-1</id>
        <name>A</name>
        <sequence type="displayed"/>
    </isoform>
    <isoform>
        <id>P18153-2</id>
        <name>B</name>
        <sequence type="described" ref="VSP_034863 VSP_034864 VSP_034865"/>
    </isoform>
</comment>
<comment type="tissue specificity">
    <text evidence="3 4 6 7 8">Saliva (at protein level) (PubMed:16512811, PubMed:2052024, PubMed:27632170, PubMed:17913537). Female salivary gland (at protein level) (PubMed:2052024, PubMed:27632170). Detected in the head and thorax of the female mosquitoes, where the salivary glands are located (PubMed:32799410). Expressed in the distal-lateral and medial lobes of the female salivary gland but not in the carcass (PubMed:2052024). No or low-level expression in the adult male mosquito tissues (PubMed:2052024).</text>
</comment>
<comment type="developmental stage">
    <text evidence="6 8">No expression in embryo and larval stages (PubMed:2052024). No or low-level expression in female pupae (PubMed:2052024, PubMed:32799410).</text>
</comment>
<comment type="induction">
    <text evidence="7">(Microbial infection) Up-regulated during dengue virus type 2 infection (at protein level).</text>
</comment>
<comment type="domain">
    <text evidence="5">Lipids and biogenic amines bind independently through different binding pockets, with lipids binding to the N-terminal pocket and biogenic amines to the C-terminal pocket.</text>
</comment>
<comment type="disruption phenotype">
    <text evidence="9">Mosquitoes show longer probing times when fed on mouse or chicken but not when using an artificial membrane feeder or mice deficient in leukotrienes (PubMed:37909749). Reduced blood-feeding success, defined as the percentage of engorged mosquitoes after a fixed amount of time, when fed on vertebrate hosts (PubMed:37909749).</text>
</comment>
<comment type="disruption phenotype">
    <text evidence="9">(Microbial infection) Significant reduction in the numbers of oocysts in the mosquito midgut after infection with Plasmodium gallinaceum, the causative agent of avian malaria.</text>
</comment>
<comment type="allergen">
    <text evidence="3">Causes an allergic reaction in human (PubMed:16512811). Binds to IgE (PubMed:16512811).</text>
</comment>
<comment type="similarity">
    <text evidence="16">Belongs to the PBP/GOBP family.</text>
</comment>
<feature type="signal peptide" evidence="1">
    <location>
        <begin position="1"/>
        <end position="17"/>
    </location>
</feature>
<feature type="chain" id="PRO_0000021059" description="Long form salivary protein D7L1">
    <location>
        <begin position="18"/>
        <end position="321"/>
    </location>
</feature>
<feature type="binding site" evidence="5 21">
    <location>
        <position position="55"/>
    </location>
    <ligand>
        <name>leukotriene E4</name>
        <dbReference type="ChEBI" id="CHEBI:57462"/>
    </ligand>
</feature>
<feature type="binding site" evidence="5 21">
    <location>
        <position position="148"/>
    </location>
    <ligand>
        <name>leukotriene E4</name>
        <dbReference type="ChEBI" id="CHEBI:57462"/>
    </ligand>
</feature>
<feature type="binding site" evidence="5 21">
    <location>
        <position position="167"/>
    </location>
    <ligand>
        <name>leukotriene E4</name>
        <dbReference type="ChEBI" id="CHEBI:57462"/>
    </ligand>
</feature>
<feature type="binding site" evidence="5 20">
    <location>
        <position position="176"/>
    </location>
    <ligand>
        <name>noradrenaline</name>
        <dbReference type="ChEBI" id="CHEBI:166902"/>
    </ligand>
</feature>
<feature type="binding site" evidence="5 20">
    <location>
        <position position="194"/>
    </location>
    <ligand>
        <name>noradrenaline</name>
        <dbReference type="ChEBI" id="CHEBI:166902"/>
    </ligand>
</feature>
<feature type="binding site" evidence="5 20">
    <location>
        <position position="207"/>
    </location>
    <ligand>
        <name>noradrenaline</name>
        <dbReference type="ChEBI" id="CHEBI:166902"/>
    </ligand>
</feature>
<feature type="binding site" evidence="5 20">
    <location>
        <position position="283"/>
    </location>
    <ligand>
        <name>noradrenaline</name>
        <dbReference type="ChEBI" id="CHEBI:166902"/>
    </ligand>
</feature>
<feature type="binding site" evidence="5 20">
    <location>
        <position position="286"/>
    </location>
    <ligand>
        <name>noradrenaline</name>
        <dbReference type="ChEBI" id="CHEBI:166902"/>
    </ligand>
</feature>
<feature type="disulfide bond" evidence="5 18 19 20 21">
    <location>
        <begin position="34"/>
        <end position="71"/>
    </location>
</feature>
<feature type="disulfide bond" evidence="5 18 19 20 21">
    <location>
        <begin position="67"/>
        <end position="124"/>
    </location>
</feature>
<feature type="disulfide bond" evidence="5 18 19 20 21">
    <location>
        <begin position="175"/>
        <end position="210"/>
    </location>
</feature>
<feature type="disulfide bond" evidence="5 18 19 20 21">
    <location>
        <begin position="191"/>
        <end position="319"/>
    </location>
</feature>
<feature type="disulfide bond" evidence="5 18 19 20 21">
    <location>
        <begin position="250"/>
        <end position="268"/>
    </location>
</feature>
<feature type="splice variant" id="VSP_034863" description="In isoform B." evidence="11">
    <location>
        <begin position="74"/>
        <end position="87"/>
    </location>
</feature>
<feature type="splice variant" id="VSP_034864" description="In isoform B." evidence="11">
    <original>G</original>
    <variation>V</variation>
    <location>
        <position position="161"/>
    </location>
</feature>
<feature type="splice variant" id="VSP_034865" description="In isoform B." evidence="11">
    <location>
        <begin position="162"/>
        <end position="226"/>
    </location>
</feature>
<feature type="sequence conflict" description="In Ref. 1; AAA29347." evidence="16" ref="1">
    <original>P</original>
    <variation>L</variation>
    <location>
        <position position="4"/>
    </location>
</feature>
<feature type="sequence conflict" description="In Ref. 1; AAA29347." evidence="16" ref="1">
    <original>V</original>
    <variation>F</variation>
    <location>
        <position position="10"/>
    </location>
</feature>
<feature type="sequence conflict" description="In Ref. 1; AAA29347 and 4; AAD01849." evidence="16" ref="1 4">
    <original>T</original>
    <variation>M</variation>
    <location>
        <position position="19"/>
    </location>
</feature>
<feature type="sequence conflict" description="In Ref. 1; AAA29347 and 4; AAD01849." evidence="16" ref="1 4">
    <original>T</original>
    <variation>I</variation>
    <location>
        <position position="30"/>
    </location>
</feature>
<feature type="sequence conflict" description="In Ref. 1; AAA29347 and 4; AAD01849." evidence="16" ref="1 4">
    <original>P</original>
    <variation>A</variation>
    <location>
        <position position="43"/>
    </location>
</feature>
<feature type="sequence conflict" description="In Ref. 1; AAA29347 and 4; AAD01849." evidence="16" ref="1 4">
    <original>Q</original>
    <variation>K</variation>
    <location>
        <position position="115"/>
    </location>
</feature>
<feature type="sequence conflict" description="In Ref. 1; AAA29348." evidence="16" ref="1">
    <original>Q</original>
    <variation>K</variation>
    <location>
        <position position="169"/>
    </location>
</feature>
<feature type="sequence conflict" description="In Ref. 1; AAA29347." evidence="16" ref="1">
    <original>K</original>
    <variation>Q</variation>
    <location>
        <position position="192"/>
    </location>
</feature>
<feature type="sequence conflict" description="In Ref. 1; AAA29347." evidence="16" ref="1">
    <original>NNELDA</original>
    <variation>DNQLDV</variation>
    <location>
        <begin position="221"/>
        <end position="226"/>
    </location>
</feature>
<feature type="sequence conflict" description="In Ref. 1; AAA29347/AAA29348 and 4; AAD01849." evidence="16" ref="1 4">
    <original>MQ</original>
    <variation>KL</variation>
    <location>
        <begin position="234"/>
        <end position="235"/>
    </location>
</feature>
<feature type="sequence conflict" description="In Ref. 1; AAA29347/AAA29348 and 4; AAD01849." evidence="16" ref="1 4">
    <original>G</original>
    <variation>K</variation>
    <location>
        <position position="259"/>
    </location>
</feature>
<feature type="sequence conflict" description="In Ref. 1; AAA29347/AAA29348." evidence="16" ref="1">
    <original>V</original>
    <variation>A</variation>
    <location>
        <position position="301"/>
    </location>
</feature>
<feature type="helix" evidence="22">
    <location>
        <begin position="24"/>
        <end position="38"/>
    </location>
</feature>
<feature type="helix" evidence="22">
    <location>
        <begin position="45"/>
        <end position="52"/>
    </location>
</feature>
<feature type="turn" evidence="22">
    <location>
        <begin position="53"/>
        <end position="55"/>
    </location>
</feature>
<feature type="helix" evidence="22">
    <location>
        <begin position="63"/>
        <end position="75"/>
    </location>
</feature>
<feature type="strand" evidence="22">
    <location>
        <begin position="78"/>
        <end position="80"/>
    </location>
</feature>
<feature type="turn" evidence="22">
    <location>
        <begin position="81"/>
        <end position="84"/>
    </location>
</feature>
<feature type="helix" evidence="22">
    <location>
        <begin position="89"/>
        <end position="97"/>
    </location>
</feature>
<feature type="helix" evidence="22">
    <location>
        <begin position="99"/>
        <end position="101"/>
    </location>
</feature>
<feature type="helix" evidence="22">
    <location>
        <begin position="104"/>
        <end position="115"/>
    </location>
</feature>
<feature type="helix" evidence="22">
    <location>
        <begin position="124"/>
        <end position="137"/>
    </location>
</feature>
<feature type="helix" evidence="22">
    <location>
        <begin position="139"/>
        <end position="145"/>
    </location>
</feature>
<feature type="helix" evidence="22">
    <location>
        <begin position="150"/>
        <end position="160"/>
    </location>
</feature>
<feature type="helix" evidence="22">
    <location>
        <begin position="161"/>
        <end position="163"/>
    </location>
</feature>
<feature type="helix" evidence="22">
    <location>
        <begin position="171"/>
        <end position="179"/>
    </location>
</feature>
<feature type="helix" evidence="22">
    <location>
        <begin position="187"/>
        <end position="189"/>
    </location>
</feature>
<feature type="helix" evidence="22">
    <location>
        <begin position="190"/>
        <end position="193"/>
    </location>
</feature>
<feature type="turn" evidence="22">
    <location>
        <begin position="194"/>
        <end position="196"/>
    </location>
</feature>
<feature type="helix" evidence="22">
    <location>
        <begin position="202"/>
        <end position="214"/>
    </location>
</feature>
<feature type="helix" evidence="22">
    <location>
        <begin position="226"/>
        <end position="235"/>
    </location>
</feature>
<feature type="helix" evidence="22">
    <location>
        <begin position="241"/>
        <end position="252"/>
    </location>
</feature>
<feature type="helix" evidence="22">
    <location>
        <begin position="258"/>
        <end position="260"/>
    </location>
</feature>
<feature type="helix" evidence="22">
    <location>
        <begin position="261"/>
        <end position="271"/>
    </location>
</feature>
<feature type="helix" evidence="22">
    <location>
        <begin position="275"/>
        <end position="289"/>
    </location>
</feature>
<feature type="turn" evidence="22">
    <location>
        <begin position="292"/>
        <end position="295"/>
    </location>
</feature>
<feature type="strand" evidence="22">
    <location>
        <begin position="296"/>
        <end position="298"/>
    </location>
</feature>
<feature type="helix" evidence="23">
    <location>
        <begin position="304"/>
        <end position="318"/>
    </location>
</feature>
<gene>
    <name type="primary">D7</name>
    <name evidence="15" type="synonym">D7L1</name>
    <name type="ORF">AAEL006424</name>
</gene>
<keyword id="KW-0002">3D-structure</keyword>
<keyword id="KW-0020">Allergen</keyword>
<keyword id="KW-0025">Alternative splicing</keyword>
<keyword id="KW-0930">Antiviral protein</keyword>
<keyword id="KW-1015">Disulfide bond</keyword>
<keyword id="KW-1199">Hemostasis impairing toxin</keyword>
<keyword id="KW-1201">Platelet aggregation inhibiting toxin</keyword>
<keyword id="KW-1185">Reference proteome</keyword>
<keyword id="KW-0964">Secreted</keyword>
<keyword id="KW-0732">Signal</keyword>
<keyword id="KW-0800">Toxin</keyword>
<keyword id="KW-0838">Vasoactive</keyword>
<keyword id="KW-0840">Vasodilator</keyword>
<accession>P18153</accession>
<accession>O96364</accession>
<accession>Q0IF92</accession>
<protein>
    <recommendedName>
        <fullName evidence="16">Long form salivary protein D7L1</fullName>
        <shortName evidence="13">AeD7</shortName>
        <shortName evidence="14 15">AeD7L1</shortName>
    </recommendedName>
    <alternativeName>
        <fullName evidence="12">37 kDa salivary gland allergen Aed a 2</fullName>
    </alternativeName>
    <alternativeName>
        <fullName>Protein D7</fullName>
    </alternativeName>
    <allergenName evidence="12">Aed a 2</allergenName>
</protein>
<sequence>MKLPLLLAIVTTFSVVASTGPFDPEEMLFTFTRCMEDNLEDGPNRLPMLAKWKEWINEPVDSPATQCFGKCVLVRTGLYDPVAQKFDASVIQEQFKAYPSLGEKSKVEAYANAVQQLPSTNNDCAAVFKAYDPVHKAHKDTSKNLFHGNKELTKGLYEKLGKDIRQKKQSYFEFCENKYYPAGSDKRQQLCKIRQYTVLDDALFKEHTDCVMKGIRYITKNNELDAEEVKRDFMQVNKDTKALEKVLNDCKSKEPSNAGEKSWHYYKCLVESSVKDDFKEAFDYREVRSQIYAFNLPKKQVYSKPAVQSQVMEIDGKQCPQ</sequence>
<reference key="1">
    <citation type="journal article" date="1991" name="Mol. Biochem. Parasitol.">
        <title>Isolation and characterization of the gene expressing the major salivary gland protein of the female mosquito, Aedes aegypti.</title>
        <authorList>
            <person name="James A.A."/>
            <person name="Blackmer K."/>
            <person name="Marinotti O."/>
            <person name="Ghosn C.R."/>
            <person name="Racioppi J.V."/>
        </authorList>
    </citation>
    <scope>NUCLEOTIDE SEQUENCE [GENOMIC DNA / MRNA] (ISOFORM A)</scope>
    <scope>SUBCELLULAR LOCATION</scope>
    <scope>TISSUE SPECIFICITY</scope>
    <scope>DEVELOPMENTAL STAGE</scope>
    <source>
        <strain>Rockefeller</strain>
        <tissue>Salivary gland</tissue>
    </source>
</reference>
<reference key="2">
    <citation type="journal article" date="2007" name="Genome Biol.">
        <title>Analysis of 14 BAC sequences from the Aedes aegypti genome: a benchmark for genome annotation and assembly.</title>
        <authorList>
            <person name="Lobo N.F."/>
            <person name="Campbell K.S."/>
            <person name="Thaner D."/>
            <person name="Debruyn B."/>
            <person name="Koo H."/>
            <person name="Gelbart W.M."/>
            <person name="Loftus B.J."/>
            <person name="Severson D.W."/>
            <person name="Collins F.H."/>
        </authorList>
    </citation>
    <scope>NUCLEOTIDE SEQUENCE [LARGE SCALE GENOMIC DNA]</scope>
    <source>
        <strain>Liverpool</strain>
    </source>
</reference>
<reference key="3">
    <citation type="journal article" date="2007" name="Science">
        <title>Genome sequence of Aedes aegypti, a major arbovirus vector.</title>
        <authorList>
            <person name="Nene V."/>
            <person name="Wortman J.R."/>
            <person name="Lawson D."/>
            <person name="Haas B.J."/>
            <person name="Kodira C.D."/>
            <person name="Tu Z.J."/>
            <person name="Loftus B.J."/>
            <person name="Xi Z."/>
            <person name="Megy K."/>
            <person name="Grabherr M."/>
            <person name="Ren Q."/>
            <person name="Zdobnov E.M."/>
            <person name="Lobo N.F."/>
            <person name="Campbell K.S."/>
            <person name="Brown S.E."/>
            <person name="Bonaldo M.F."/>
            <person name="Zhu J."/>
            <person name="Sinkins S.P."/>
            <person name="Hogenkamp D.G."/>
            <person name="Amedeo P."/>
            <person name="Arensburger P."/>
            <person name="Atkinson P.W."/>
            <person name="Bidwell S.L."/>
            <person name="Biedler J."/>
            <person name="Birney E."/>
            <person name="Bruggner R.V."/>
            <person name="Costas J."/>
            <person name="Coy M.R."/>
            <person name="Crabtree J."/>
            <person name="Crawford M."/>
            <person name="DeBruyn B."/>
            <person name="DeCaprio D."/>
            <person name="Eiglmeier K."/>
            <person name="Eisenstadt E."/>
            <person name="El-Dorry H."/>
            <person name="Gelbart W.M."/>
            <person name="Gomes S.L."/>
            <person name="Hammond M."/>
            <person name="Hannick L.I."/>
            <person name="Hogan J.R."/>
            <person name="Holmes M.H."/>
            <person name="Jaffe D."/>
            <person name="Johnston S.J."/>
            <person name="Kennedy R.C."/>
            <person name="Koo H."/>
            <person name="Kravitz S."/>
            <person name="Kriventseva E.V."/>
            <person name="Kulp D."/>
            <person name="Labutti K."/>
            <person name="Lee E."/>
            <person name="Li S."/>
            <person name="Lovin D.D."/>
            <person name="Mao C."/>
            <person name="Mauceli E."/>
            <person name="Menck C.F."/>
            <person name="Miller J.R."/>
            <person name="Montgomery P."/>
            <person name="Mori A."/>
            <person name="Nascimento A.L."/>
            <person name="Naveira H.F."/>
            <person name="Nusbaum C."/>
            <person name="O'Leary S.B."/>
            <person name="Orvis J."/>
            <person name="Pertea M."/>
            <person name="Quesneville H."/>
            <person name="Reidenbach K.R."/>
            <person name="Rogers Y.-H.C."/>
            <person name="Roth C.W."/>
            <person name="Schneider J.R."/>
            <person name="Schatz M."/>
            <person name="Shumway M."/>
            <person name="Stanke M."/>
            <person name="Stinson E.O."/>
            <person name="Tubio J.M.C."/>
            <person name="Vanzee J.P."/>
            <person name="Verjovski-Almeida S."/>
            <person name="Werner D."/>
            <person name="White O.R."/>
            <person name="Wyder S."/>
            <person name="Zeng Q."/>
            <person name="Zhao Q."/>
            <person name="Zhao Y."/>
            <person name="Hill C.A."/>
            <person name="Raikhel A.S."/>
            <person name="Soares M.B."/>
            <person name="Knudson D.L."/>
            <person name="Lee N.H."/>
            <person name="Galagan J."/>
            <person name="Salzberg S.L."/>
            <person name="Paulsen I.T."/>
            <person name="Dimopoulos G."/>
            <person name="Collins F.H."/>
            <person name="Bruce B."/>
            <person name="Fraser-Liggett C.M."/>
            <person name="Severson D.W."/>
        </authorList>
    </citation>
    <scope>NUCLEOTIDE SEQUENCE [LARGE SCALE GENOMIC DNA]</scope>
    <source>
        <strain>LVPib12</strain>
    </source>
</reference>
<reference key="4">
    <citation type="journal article" date="1999" name="Insect Biochem. Mol. Biol.">
        <title>Vertebrate exon trapping methods: implications for transcript mapping with mosquito DNA.</title>
        <authorList>
            <person name="Brown S.E."/>
            <person name="Wood S.H."/>
            <person name="Knudson D.L."/>
        </authorList>
    </citation>
    <scope>NUCLEOTIDE SEQUENCE [MRNA] OF 16-286 (ISOFORM B)</scope>
</reference>
<reference key="5">
    <citation type="journal article" date="2006" name="Allergy">
        <title>A new recombinant mosquito salivary allergen, rAed a 2: allergenicity, clinical relevance, and cross-reactivity.</title>
        <authorList>
            <person name="Peng Z."/>
            <person name="Xu W."/>
            <person name="Lam H."/>
            <person name="Cheng L."/>
            <person name="James A.A."/>
            <person name="Simons F.E."/>
        </authorList>
    </citation>
    <scope>TISSUE SPECIFICITY</scope>
    <scope>ALLERGEN</scope>
</reference>
<reference key="6">
    <citation type="journal article" date="2006" name="J. Biol. Chem.">
        <title>Function and evolution of a mosquito salivary protein family.</title>
        <authorList>
            <person name="Calvo E."/>
            <person name="Mans B.J."/>
            <person name="Andersen J.F."/>
            <person name="Ribeiro J.M."/>
        </authorList>
    </citation>
    <scope>FUNCTION</scope>
</reference>
<reference key="7">
    <citation type="journal article" date="2007" name="Microbes Infect.">
        <title>Antibody response against saliva antigens of Anopheles gambiae and Aedes aegypti in travellers in tropical Africa.</title>
        <authorList>
            <person name="Orlandi-Pradines E."/>
            <person name="Almeras L."/>
            <person name="Denis de Senneville L."/>
            <person name="Barbe S."/>
            <person name="Remoue F."/>
            <person name="Villard C."/>
            <person name="Cornelie S."/>
            <person name="Penhoat K."/>
            <person name="Pascual A."/>
            <person name="Bourgouin C."/>
            <person name="Fontenille D."/>
            <person name="Bonnet J."/>
            <person name="Corre-Catelin N."/>
            <person name="Reiter P."/>
            <person name="Pages F."/>
            <person name="Laffite D."/>
            <person name="Boulanger D."/>
            <person name="Simondon F."/>
            <person name="Pradines B."/>
            <person name="Fusai T."/>
            <person name="Rogier C."/>
        </authorList>
    </citation>
    <scope>IDENTIFICATION BY MASS SPECTROMETRY</scope>
    <scope>SUBCELLULAR LOCATION</scope>
    <scope>TISSUE SPECIFICITY</scope>
</reference>
<reference key="8">
    <citation type="journal article" date="2016" name="PLoS Negl. Trop. Dis.">
        <title>Aedes aegypti D7 Saliva Protein Inhibits Dengue Virus Infection.</title>
        <authorList>
            <person name="Conway M.J."/>
            <person name="Londono-Renteria B."/>
            <person name="Troupin A."/>
            <person name="Watson A.M."/>
            <person name="Klimstra W.B."/>
            <person name="Fikrig E."/>
            <person name="Colpitts T.M."/>
        </authorList>
    </citation>
    <scope>IDENTIFICATION BY MASS SPECTROMETRY</scope>
    <scope>FUNCTION (MICROBIAL INFECTION)</scope>
    <scope>SUBUNIT (MICROBIAL INFECTION)</scope>
    <scope>SUBCELLULAR LOCATION</scope>
    <scope>TISSUE SPECIFICITY</scope>
    <scope>INDUCTION (MICROBIAL INFECTION)</scope>
</reference>
<reference key="9">
    <citation type="journal article" date="2021" name="FEBS J.">
        <title>Biochemical characterization of AeD7L2 and its physiological relevance in blood feeding in the dengue mosquito vector, Aedes aegypti.</title>
        <authorList>
            <person name="Martin-Martin I."/>
            <person name="Kern O."/>
            <person name="Brooks S."/>
            <person name="Smith L.B."/>
            <person name="Valenzuela-Leon P.C."/>
            <person name="Bonilla B."/>
            <person name="Ackerman H."/>
            <person name="Calvo E."/>
        </authorList>
    </citation>
    <scope>FUNCTION</scope>
    <scope>TISSUE SPECIFICITY</scope>
    <scope>DEVELOPMENTAL STAGE</scope>
</reference>
<reference key="10">
    <citation type="journal article" date="2023" name="MBio">
        <title>Aedes aegypti D7 long salivary proteins modulate blood feeding and parasite infection.</title>
        <authorList>
            <person name="Martin-Martin I."/>
            <person name="Kojin B.B."/>
            <person name="Aryan A."/>
            <person name="Williams A.E."/>
            <person name="Molina-Cruz A."/>
            <person name="Valenzuela-Leon P.C."/>
            <person name="Shrivastava G."/>
            <person name="Botello K."/>
            <person name="Minai M."/>
            <person name="Adelman Z.N."/>
            <person name="Calvo E."/>
        </authorList>
    </citation>
    <scope>FUNCTION</scope>
    <scope>FUNCTION (MICROBIAL INFECTION)</scope>
    <scope>DISRUPTION PHENOTYPE</scope>
    <scope>DISRUPTION PHENOTYPE (MICROBIAL INFECTION)</scope>
    <source>
        <strain evidence="15">Liverpool</strain>
    </source>
</reference>
<reference key="11">
    <citation type="journal article" date="2024" name="EMBO J.">
        <title>A mosquito salivary protein-driven influx of myeloid cells facilitates flavivirus transmission.</title>
        <authorList>
            <person name="Wang Z."/>
            <person name="Nie K."/>
            <person name="Liang Y."/>
            <person name="Niu J."/>
            <person name="Yu X."/>
            <person name="Zhang O."/>
            <person name="Liu L."/>
            <person name="Shi X."/>
            <person name="Wang Y."/>
            <person name="Feng X."/>
            <person name="Zhu Y."/>
            <person name="Wang P."/>
            <person name="Cheng G."/>
        </authorList>
    </citation>
    <scope>FUNCTION</scope>
</reference>
<reference evidence="17 18 19 21" key="12">
    <citation type="journal article" date="2009" name="Proc. Natl. Acad. Sci. U.S.A.">
        <title>Multifunctionality and mechanism of ligand binding in a mosquito antiinflammatory protein.</title>
        <authorList>
            <person name="Calvo E."/>
            <person name="Mans B.J."/>
            <person name="Ribeiro J.M."/>
            <person name="Andersen J.F."/>
        </authorList>
    </citation>
    <scope>X-RAY CRYSTALLOGRAPHY (1.30 ANGSTROMS) OF 20-321 IN COMPLEX WITH L-NORADRENALINE AND LEUKOTRIENE E4</scope>
    <scope>FUNCTION</scope>
    <scope>DOMAIN</scope>
    <scope>DISULFIDE BOND</scope>
</reference>
<organism>
    <name type="scientific">Aedes aegypti</name>
    <name type="common">Yellowfever mosquito</name>
    <name type="synonym">Culex aegypti</name>
    <dbReference type="NCBI Taxonomy" id="7159"/>
    <lineage>
        <taxon>Eukaryota</taxon>
        <taxon>Metazoa</taxon>
        <taxon>Ecdysozoa</taxon>
        <taxon>Arthropoda</taxon>
        <taxon>Hexapoda</taxon>
        <taxon>Insecta</taxon>
        <taxon>Pterygota</taxon>
        <taxon>Neoptera</taxon>
        <taxon>Endopterygota</taxon>
        <taxon>Diptera</taxon>
        <taxon>Nematocera</taxon>
        <taxon>Culicoidea</taxon>
        <taxon>Culicidae</taxon>
        <taxon>Culicinae</taxon>
        <taxon>Aedini</taxon>
        <taxon>Aedes</taxon>
        <taxon>Stegomyia</taxon>
    </lineage>
</organism>
<evidence type="ECO:0000255" key="1"/>
<evidence type="ECO:0000269" key="2">
    <source>
    </source>
</evidence>
<evidence type="ECO:0000269" key="3">
    <source>
    </source>
</evidence>
<evidence type="ECO:0000269" key="4">
    <source>
    </source>
</evidence>
<evidence type="ECO:0000269" key="5">
    <source>
    </source>
</evidence>
<evidence type="ECO:0000269" key="6">
    <source>
    </source>
</evidence>
<evidence type="ECO:0000269" key="7">
    <source>
    </source>
</evidence>
<evidence type="ECO:0000269" key="8">
    <source>
    </source>
</evidence>
<evidence type="ECO:0000269" key="9">
    <source>
    </source>
</evidence>
<evidence type="ECO:0000269" key="10">
    <source>
    </source>
</evidence>
<evidence type="ECO:0000303" key="11">
    <source>
    </source>
</evidence>
<evidence type="ECO:0000303" key="12">
    <source>
    </source>
</evidence>
<evidence type="ECO:0000303" key="13">
    <source>
    </source>
</evidence>
<evidence type="ECO:0000303" key="14">
    <source>
    </source>
</evidence>
<evidence type="ECO:0000303" key="15">
    <source>
    </source>
</evidence>
<evidence type="ECO:0000305" key="16"/>
<evidence type="ECO:0000312" key="17">
    <source>
        <dbReference type="PDB" id="3DYE"/>
    </source>
</evidence>
<evidence type="ECO:0007744" key="18">
    <source>
        <dbReference type="PDB" id="3DXL"/>
    </source>
</evidence>
<evidence type="ECO:0007744" key="19">
    <source>
        <dbReference type="PDB" id="3DY9"/>
    </source>
</evidence>
<evidence type="ECO:0007744" key="20">
    <source>
        <dbReference type="PDB" id="3DYE"/>
    </source>
</evidence>
<evidence type="ECO:0007744" key="21">
    <source>
        <dbReference type="PDB" id="3DZT"/>
    </source>
</evidence>
<evidence type="ECO:0007829" key="22">
    <source>
        <dbReference type="PDB" id="3DXL"/>
    </source>
</evidence>
<evidence type="ECO:0007829" key="23">
    <source>
        <dbReference type="PDB" id="3DYE"/>
    </source>
</evidence>
<proteinExistence type="evidence at protein level"/>